<accession>Q94BV5</accession>
<accession>Q8LFQ9</accession>
<accession>Q9SXD7</accession>
<proteinExistence type="evidence at transcript level"/>
<organism>
    <name type="scientific">Arabidopsis thaliana</name>
    <name type="common">Mouse-ear cress</name>
    <dbReference type="NCBI Taxonomy" id="3702"/>
    <lineage>
        <taxon>Eukaryota</taxon>
        <taxon>Viridiplantae</taxon>
        <taxon>Streptophyta</taxon>
        <taxon>Embryophyta</taxon>
        <taxon>Tracheophyta</taxon>
        <taxon>Spermatophyta</taxon>
        <taxon>Magnoliopsida</taxon>
        <taxon>eudicotyledons</taxon>
        <taxon>Gunneridae</taxon>
        <taxon>Pentapetalae</taxon>
        <taxon>rosids</taxon>
        <taxon>malvids</taxon>
        <taxon>Brassicales</taxon>
        <taxon>Brassicaceae</taxon>
        <taxon>Camelineae</taxon>
        <taxon>Arabidopsis</taxon>
    </lineage>
</organism>
<sequence length="452" mass="51312">MAPSLSPIRSHHVAVIGAGAAGLVAARELRREGHSVVVFERQKQVGGTWIYTDHIEPDPLSVDPTRSVVHSSVYGSLRTNLPRECMGYRDFPFVIRSDVSESRDPRRFPSHGEVLAYLQDFAKEFAIEEMIRFDTAVVKVAPAAEEGSGKWRIESTEKEKKVLRDEIYDAVVVCNGHYIEPRHAEIPGISSWPGKEMHSHNYRIPEPFRDQVVVLIGNSASADDISRDIARVAKEVHVACRSNAADTYIERPGYSNLWMHSMIESVHEDGSVVFQNGKTISVDVIMHCTGYKYHFPFLETNGNVTVDDNRVGPLYKDVFSPAFAPWLSFVGIPWKVVPFPMFELQSKWIAGVLSGRIPLPSKEDMMMEIKTLYSTLDAQGIAKRYTHQMGISQFEYNSWLASQCGCSETEEWRKEMYFATGVKKRAHPETYRDEWDDHHLVSQAYQDFSLYT</sequence>
<dbReference type="EC" id="1.8.-.-"/>
<dbReference type="EMBL" id="AC005698">
    <property type="protein sequence ID" value="AAD43617.1"/>
    <property type="status" value="ALT_SEQ"/>
    <property type="molecule type" value="Genomic_DNA"/>
</dbReference>
<dbReference type="EMBL" id="CP002684">
    <property type="protein sequence ID" value="AEE33982.1"/>
    <property type="molecule type" value="Genomic_DNA"/>
</dbReference>
<dbReference type="EMBL" id="AY039861">
    <property type="protein sequence ID" value="AAK63965.1"/>
    <property type="molecule type" value="mRNA"/>
</dbReference>
<dbReference type="EMBL" id="BT000506">
    <property type="protein sequence ID" value="AAN18075.1"/>
    <property type="molecule type" value="mRNA"/>
</dbReference>
<dbReference type="EMBL" id="AY084698">
    <property type="protein sequence ID" value="AAM61259.1"/>
    <property type="molecule type" value="mRNA"/>
</dbReference>
<dbReference type="RefSeq" id="NP_176448.1">
    <property type="nucleotide sequence ID" value="NM_104938.5"/>
</dbReference>
<dbReference type="SMR" id="Q94BV5"/>
<dbReference type="FunCoup" id="Q94BV5">
    <property type="interactions" value="749"/>
</dbReference>
<dbReference type="STRING" id="3702.Q94BV5"/>
<dbReference type="iPTMnet" id="Q94BV5"/>
<dbReference type="PaxDb" id="3702-AT1G62600.1"/>
<dbReference type="ProteomicsDB" id="247227"/>
<dbReference type="EnsemblPlants" id="AT1G62600.1">
    <property type="protein sequence ID" value="AT1G62600.1"/>
    <property type="gene ID" value="AT1G62600"/>
</dbReference>
<dbReference type="GeneID" id="842557"/>
<dbReference type="Gramene" id="AT1G62600.1">
    <property type="protein sequence ID" value="AT1G62600.1"/>
    <property type="gene ID" value="AT1G62600"/>
</dbReference>
<dbReference type="KEGG" id="ath:AT1G62600"/>
<dbReference type="Araport" id="AT1G62600"/>
<dbReference type="TAIR" id="AT1G62600"/>
<dbReference type="eggNOG" id="KOG1399">
    <property type="taxonomic scope" value="Eukaryota"/>
</dbReference>
<dbReference type="HOGENOM" id="CLU_006909_3_0_1"/>
<dbReference type="InParanoid" id="Q94BV5"/>
<dbReference type="OMA" id="VMIKEVN"/>
<dbReference type="PhylomeDB" id="Q94BV5"/>
<dbReference type="BioCyc" id="ARA:AT1G62600-MONOMER"/>
<dbReference type="PRO" id="PR:Q94BV5"/>
<dbReference type="Proteomes" id="UP000006548">
    <property type="component" value="Chromosome 1"/>
</dbReference>
<dbReference type="ExpressionAtlas" id="Q94BV5">
    <property type="expression patterns" value="baseline and differential"/>
</dbReference>
<dbReference type="GO" id="GO:0000325">
    <property type="term" value="C:plant-type vacuole"/>
    <property type="evidence" value="ECO:0007005"/>
    <property type="project" value="TAIR"/>
</dbReference>
<dbReference type="GO" id="GO:0050660">
    <property type="term" value="F:flavin adenine dinucleotide binding"/>
    <property type="evidence" value="ECO:0007669"/>
    <property type="project" value="InterPro"/>
</dbReference>
<dbReference type="GO" id="GO:0004499">
    <property type="term" value="F:N,N-dimethylaniline monooxygenase activity"/>
    <property type="evidence" value="ECO:0007669"/>
    <property type="project" value="InterPro"/>
</dbReference>
<dbReference type="GO" id="GO:0050661">
    <property type="term" value="F:NADP binding"/>
    <property type="evidence" value="ECO:0007669"/>
    <property type="project" value="InterPro"/>
</dbReference>
<dbReference type="FunFam" id="3.50.50.60:FF:000099">
    <property type="entry name" value="Flavin-containing monooxygenase"/>
    <property type="match status" value="1"/>
</dbReference>
<dbReference type="Gene3D" id="3.50.50.60">
    <property type="entry name" value="FAD/NAD(P)-binding domain"/>
    <property type="match status" value="2"/>
</dbReference>
<dbReference type="InterPro" id="IPR036188">
    <property type="entry name" value="FAD/NAD-bd_sf"/>
</dbReference>
<dbReference type="InterPro" id="IPR000960">
    <property type="entry name" value="Flavin_mOase"/>
</dbReference>
<dbReference type="InterPro" id="IPR020946">
    <property type="entry name" value="Flavin_mOase-like"/>
</dbReference>
<dbReference type="InterPro" id="IPR050346">
    <property type="entry name" value="FMO-like"/>
</dbReference>
<dbReference type="PANTHER" id="PTHR23023">
    <property type="entry name" value="DIMETHYLANILINE MONOOXYGENASE"/>
    <property type="match status" value="1"/>
</dbReference>
<dbReference type="Pfam" id="PF00743">
    <property type="entry name" value="FMO-like"/>
    <property type="match status" value="2"/>
</dbReference>
<dbReference type="PIRSF" id="PIRSF000332">
    <property type="entry name" value="FMO"/>
    <property type="match status" value="1"/>
</dbReference>
<dbReference type="PRINTS" id="PR00370">
    <property type="entry name" value="FMOXYGENASE"/>
</dbReference>
<dbReference type="SUPFAM" id="SSF51905">
    <property type="entry name" value="FAD/NAD(P)-binding domain"/>
    <property type="match status" value="2"/>
</dbReference>
<name>GSXL4_ARATH</name>
<feature type="chain" id="PRO_0000401959" description="Flavin-containing monooxygenase FMO GS-OX-like 4">
    <location>
        <begin position="1"/>
        <end position="452"/>
    </location>
</feature>
<feature type="binding site" evidence="2">
    <location>
        <begin position="17"/>
        <end position="22"/>
    </location>
    <ligand>
        <name>FAD</name>
        <dbReference type="ChEBI" id="CHEBI:57692"/>
    </ligand>
</feature>
<feature type="binding site" evidence="2">
    <location>
        <begin position="217"/>
        <end position="222"/>
    </location>
    <ligand>
        <name>NADP(+)</name>
        <dbReference type="ChEBI" id="CHEBI:58349"/>
    </ligand>
</feature>
<feature type="sequence conflict" description="In Ref. 4; AAM61259." evidence="3" ref="4">
    <original>IRSD</original>
    <variation>VRSG</variation>
    <location>
        <begin position="95"/>
        <end position="98"/>
    </location>
</feature>
<feature type="sequence conflict" description="In Ref. 4; AAM61259." evidence="3" ref="4">
    <original>A</original>
    <variation>E</variation>
    <location>
        <position position="244"/>
    </location>
</feature>
<feature type="sequence conflict" description="In Ref. 4; AAM61259." evidence="3" ref="4">
    <original>S</original>
    <variation>N</variation>
    <location>
        <position position="255"/>
    </location>
</feature>
<feature type="sequence conflict" description="In Ref. 4; AAM61259." evidence="3" ref="4">
    <original>SVHE</original>
    <variation>CVHK</variation>
    <location>
        <begin position="265"/>
        <end position="268"/>
    </location>
</feature>
<feature type="sequence conflict" description="In Ref. 4; AAM61259." evidence="3" ref="4">
    <original>T</original>
    <variation>A</variation>
    <location>
        <position position="452"/>
    </location>
</feature>
<reference key="1">
    <citation type="journal article" date="2000" name="Nature">
        <title>Sequence and analysis of chromosome 1 of the plant Arabidopsis thaliana.</title>
        <authorList>
            <person name="Theologis A."/>
            <person name="Ecker J.R."/>
            <person name="Palm C.J."/>
            <person name="Federspiel N.A."/>
            <person name="Kaul S."/>
            <person name="White O."/>
            <person name="Alonso J."/>
            <person name="Altafi H."/>
            <person name="Araujo R."/>
            <person name="Bowman C.L."/>
            <person name="Brooks S.Y."/>
            <person name="Buehler E."/>
            <person name="Chan A."/>
            <person name="Chao Q."/>
            <person name="Chen H."/>
            <person name="Cheuk R.F."/>
            <person name="Chin C.W."/>
            <person name="Chung M.K."/>
            <person name="Conn L."/>
            <person name="Conway A.B."/>
            <person name="Conway A.R."/>
            <person name="Creasy T.H."/>
            <person name="Dewar K."/>
            <person name="Dunn P."/>
            <person name="Etgu P."/>
            <person name="Feldblyum T.V."/>
            <person name="Feng J.-D."/>
            <person name="Fong B."/>
            <person name="Fujii C.Y."/>
            <person name="Gill J.E."/>
            <person name="Goldsmith A.D."/>
            <person name="Haas B."/>
            <person name="Hansen N.F."/>
            <person name="Hughes B."/>
            <person name="Huizar L."/>
            <person name="Hunter J.L."/>
            <person name="Jenkins J."/>
            <person name="Johnson-Hopson C."/>
            <person name="Khan S."/>
            <person name="Khaykin E."/>
            <person name="Kim C.J."/>
            <person name="Koo H.L."/>
            <person name="Kremenetskaia I."/>
            <person name="Kurtz D.B."/>
            <person name="Kwan A."/>
            <person name="Lam B."/>
            <person name="Langin-Hooper S."/>
            <person name="Lee A."/>
            <person name="Lee J.M."/>
            <person name="Lenz C.A."/>
            <person name="Li J.H."/>
            <person name="Li Y.-P."/>
            <person name="Lin X."/>
            <person name="Liu S.X."/>
            <person name="Liu Z.A."/>
            <person name="Luros J.S."/>
            <person name="Maiti R."/>
            <person name="Marziali A."/>
            <person name="Militscher J."/>
            <person name="Miranda M."/>
            <person name="Nguyen M."/>
            <person name="Nierman W.C."/>
            <person name="Osborne B.I."/>
            <person name="Pai G."/>
            <person name="Peterson J."/>
            <person name="Pham P.K."/>
            <person name="Rizzo M."/>
            <person name="Rooney T."/>
            <person name="Rowley D."/>
            <person name="Sakano H."/>
            <person name="Salzberg S.L."/>
            <person name="Schwartz J.R."/>
            <person name="Shinn P."/>
            <person name="Southwick A.M."/>
            <person name="Sun H."/>
            <person name="Tallon L.J."/>
            <person name="Tambunga G."/>
            <person name="Toriumi M.J."/>
            <person name="Town C.D."/>
            <person name="Utterback T."/>
            <person name="Van Aken S."/>
            <person name="Vaysberg M."/>
            <person name="Vysotskaia V.S."/>
            <person name="Walker M."/>
            <person name="Wu D."/>
            <person name="Yu G."/>
            <person name="Fraser C.M."/>
            <person name="Venter J.C."/>
            <person name="Davis R.W."/>
        </authorList>
    </citation>
    <scope>NUCLEOTIDE SEQUENCE [LARGE SCALE GENOMIC DNA]</scope>
    <source>
        <strain>cv. Columbia</strain>
    </source>
</reference>
<reference key="2">
    <citation type="journal article" date="2017" name="Plant J.">
        <title>Araport11: a complete reannotation of the Arabidopsis thaliana reference genome.</title>
        <authorList>
            <person name="Cheng C.Y."/>
            <person name="Krishnakumar V."/>
            <person name="Chan A.P."/>
            <person name="Thibaud-Nissen F."/>
            <person name="Schobel S."/>
            <person name="Town C.D."/>
        </authorList>
    </citation>
    <scope>GENOME REANNOTATION</scope>
    <source>
        <strain>cv. Columbia</strain>
    </source>
</reference>
<reference key="3">
    <citation type="journal article" date="2003" name="Science">
        <title>Empirical analysis of transcriptional activity in the Arabidopsis genome.</title>
        <authorList>
            <person name="Yamada K."/>
            <person name="Lim J."/>
            <person name="Dale J.M."/>
            <person name="Chen H."/>
            <person name="Shinn P."/>
            <person name="Palm C.J."/>
            <person name="Southwick A.M."/>
            <person name="Wu H.C."/>
            <person name="Kim C.J."/>
            <person name="Nguyen M."/>
            <person name="Pham P.K."/>
            <person name="Cheuk R.F."/>
            <person name="Karlin-Newmann G."/>
            <person name="Liu S.X."/>
            <person name="Lam B."/>
            <person name="Sakano H."/>
            <person name="Wu T."/>
            <person name="Yu G."/>
            <person name="Miranda M."/>
            <person name="Quach H.L."/>
            <person name="Tripp M."/>
            <person name="Chang C.H."/>
            <person name="Lee J.M."/>
            <person name="Toriumi M.J."/>
            <person name="Chan M.M."/>
            <person name="Tang C.C."/>
            <person name="Onodera C.S."/>
            <person name="Deng J.M."/>
            <person name="Akiyama K."/>
            <person name="Ansari Y."/>
            <person name="Arakawa T."/>
            <person name="Banh J."/>
            <person name="Banno F."/>
            <person name="Bowser L."/>
            <person name="Brooks S.Y."/>
            <person name="Carninci P."/>
            <person name="Chao Q."/>
            <person name="Choy N."/>
            <person name="Enju A."/>
            <person name="Goldsmith A.D."/>
            <person name="Gurjal M."/>
            <person name="Hansen N.F."/>
            <person name="Hayashizaki Y."/>
            <person name="Johnson-Hopson C."/>
            <person name="Hsuan V.W."/>
            <person name="Iida K."/>
            <person name="Karnes M."/>
            <person name="Khan S."/>
            <person name="Koesema E."/>
            <person name="Ishida J."/>
            <person name="Jiang P.X."/>
            <person name="Jones T."/>
            <person name="Kawai J."/>
            <person name="Kamiya A."/>
            <person name="Meyers C."/>
            <person name="Nakajima M."/>
            <person name="Narusaka M."/>
            <person name="Seki M."/>
            <person name="Sakurai T."/>
            <person name="Satou M."/>
            <person name="Tamse R."/>
            <person name="Vaysberg M."/>
            <person name="Wallender E.K."/>
            <person name="Wong C."/>
            <person name="Yamamura Y."/>
            <person name="Yuan S."/>
            <person name="Shinozaki K."/>
            <person name="Davis R.W."/>
            <person name="Theologis A."/>
            <person name="Ecker J.R."/>
        </authorList>
    </citation>
    <scope>NUCLEOTIDE SEQUENCE [LARGE SCALE MRNA]</scope>
    <source>
        <strain>cv. Columbia</strain>
    </source>
</reference>
<reference key="4">
    <citation type="submission" date="2002-03" db="EMBL/GenBank/DDBJ databases">
        <title>Full-length cDNA from Arabidopsis thaliana.</title>
        <authorList>
            <person name="Brover V.V."/>
            <person name="Troukhan M.E."/>
            <person name="Alexandrov N.A."/>
            <person name="Lu Y.-P."/>
            <person name="Flavell R.B."/>
            <person name="Feldmann K.A."/>
        </authorList>
    </citation>
    <scope>NUCLEOTIDE SEQUENCE [LARGE SCALE MRNA]</scope>
</reference>
<reference key="5">
    <citation type="journal article" date="2007" name="Plant J.">
        <title>Identification of a flavin-monooxygenase as the S-oxygenating enzyme in aliphatic glucosinolate biosynthesis in Arabidopsis.</title>
        <authorList>
            <person name="Hansen B.G."/>
            <person name="Kliebenstein D.J."/>
            <person name="Halkier B.A."/>
        </authorList>
    </citation>
    <scope>GENE FAMILY</scope>
    <source>
        <strain>cv. Columbia</strain>
    </source>
</reference>
<protein>
    <recommendedName>
        <fullName>Flavin-containing monooxygenase FMO GS-OX-like 4</fullName>
        <ecNumber>1.8.-.-</ecNumber>
    </recommendedName>
    <alternativeName>
        <fullName>Flavin-monooxygenase glucosinolate S-oxygenase-like 4</fullName>
    </alternativeName>
</protein>
<gene>
    <name type="ordered locus">At1g62600</name>
    <name type="ORF">T3P18.16</name>
</gene>
<keyword id="KW-0274">FAD</keyword>
<keyword id="KW-0285">Flavoprotein</keyword>
<keyword id="KW-0503">Monooxygenase</keyword>
<keyword id="KW-0521">NADP</keyword>
<keyword id="KW-0560">Oxidoreductase</keyword>
<keyword id="KW-1185">Reference proteome</keyword>
<evidence type="ECO:0000250" key="1"/>
<evidence type="ECO:0000255" key="2"/>
<evidence type="ECO:0000305" key="3"/>
<comment type="function">
    <text evidence="1">Catalyzes the conversion of methylthioalkyl glucosinolates of any chain length into methylsulfinylalkyl glucosinolates.</text>
</comment>
<comment type="cofactor">
    <cofactor evidence="1">
        <name>FAD</name>
        <dbReference type="ChEBI" id="CHEBI:57692"/>
    </cofactor>
</comment>
<comment type="similarity">
    <text evidence="3">Belongs to the FMO family.</text>
</comment>
<comment type="sequence caution" evidence="3">
    <conflict type="erroneous gene model prediction">
        <sequence resource="EMBL-CDS" id="AAD43617"/>
    </conflict>
</comment>